<feature type="chain" id="PRO_0000119276" description="General transcription and DNA repair factor IIH subunit TFB5">
    <location>
        <begin position="1"/>
        <end position="72"/>
    </location>
</feature>
<organism>
    <name type="scientific">Eremothecium gossypii (strain ATCC 10895 / CBS 109.51 / FGSC 9923 / NRRL Y-1056)</name>
    <name type="common">Yeast</name>
    <name type="synonym">Ashbya gossypii</name>
    <dbReference type="NCBI Taxonomy" id="284811"/>
    <lineage>
        <taxon>Eukaryota</taxon>
        <taxon>Fungi</taxon>
        <taxon>Dikarya</taxon>
        <taxon>Ascomycota</taxon>
        <taxon>Saccharomycotina</taxon>
        <taxon>Saccharomycetes</taxon>
        <taxon>Saccharomycetales</taxon>
        <taxon>Saccharomycetaceae</taxon>
        <taxon>Eremothecium</taxon>
    </lineage>
</organism>
<gene>
    <name type="primary">TFB5</name>
    <name type="ordered locus">AGR148C</name>
</gene>
<name>TFB5_EREGS</name>
<dbReference type="EMBL" id="AE016820">
    <property type="protein sequence ID" value="AAS54638.1"/>
    <property type="molecule type" value="Genomic_DNA"/>
</dbReference>
<dbReference type="RefSeq" id="NP_986814.1">
    <property type="nucleotide sequence ID" value="NM_211876.1"/>
</dbReference>
<dbReference type="SMR" id="Q74ZQ0"/>
<dbReference type="FunCoup" id="Q74ZQ0">
    <property type="interactions" value="165"/>
</dbReference>
<dbReference type="STRING" id="284811.Q74ZQ0"/>
<dbReference type="EnsemblFungi" id="AAS54638">
    <property type="protein sequence ID" value="AAS54638"/>
    <property type="gene ID" value="AGOS_AGR148C"/>
</dbReference>
<dbReference type="GeneID" id="4623116"/>
<dbReference type="KEGG" id="ago:AGOS_AGR148C"/>
<dbReference type="eggNOG" id="KOG3451">
    <property type="taxonomic scope" value="Eukaryota"/>
</dbReference>
<dbReference type="HOGENOM" id="CLU_166246_3_2_1"/>
<dbReference type="InParanoid" id="Q74ZQ0"/>
<dbReference type="OMA" id="IYNPMDE"/>
<dbReference type="OrthoDB" id="354at2759"/>
<dbReference type="Proteomes" id="UP000000591">
    <property type="component" value="Chromosome VII"/>
</dbReference>
<dbReference type="GO" id="GO:0005829">
    <property type="term" value="C:cytosol"/>
    <property type="evidence" value="ECO:0007669"/>
    <property type="project" value="EnsemblFungi"/>
</dbReference>
<dbReference type="GO" id="GO:0000439">
    <property type="term" value="C:transcription factor TFIIH core complex"/>
    <property type="evidence" value="ECO:0000318"/>
    <property type="project" value="GO_Central"/>
</dbReference>
<dbReference type="GO" id="GO:0005675">
    <property type="term" value="C:transcription factor TFIIH holo complex"/>
    <property type="evidence" value="ECO:0000318"/>
    <property type="project" value="GO_Central"/>
</dbReference>
<dbReference type="GO" id="GO:0006294">
    <property type="term" value="P:nucleotide-excision repair, preincision complex assembly"/>
    <property type="evidence" value="ECO:0000318"/>
    <property type="project" value="GO_Central"/>
</dbReference>
<dbReference type="GO" id="GO:0006366">
    <property type="term" value="P:transcription by RNA polymerase II"/>
    <property type="evidence" value="ECO:0000318"/>
    <property type="project" value="GO_Central"/>
</dbReference>
<dbReference type="GO" id="GO:0006367">
    <property type="term" value="P:transcription initiation at RNA polymerase II promoter"/>
    <property type="evidence" value="ECO:0007669"/>
    <property type="project" value="EnsemblFungi"/>
</dbReference>
<dbReference type="FunFam" id="3.30.70.1220:FF:000002">
    <property type="entry name" value="RNA polymerase II transcription factor B subunit 5"/>
    <property type="match status" value="1"/>
</dbReference>
<dbReference type="Gene3D" id="3.30.70.1220">
    <property type="entry name" value="TFB5-like"/>
    <property type="match status" value="1"/>
</dbReference>
<dbReference type="InterPro" id="IPR035935">
    <property type="entry name" value="TFB5-like_sf"/>
</dbReference>
<dbReference type="InterPro" id="IPR009400">
    <property type="entry name" value="TFIIH_TTDA/Tfb5"/>
</dbReference>
<dbReference type="PANTHER" id="PTHR28580">
    <property type="entry name" value="GENERAL TRANSCRIPTION FACTOR IIH SUBUNIT 5"/>
    <property type="match status" value="1"/>
</dbReference>
<dbReference type="PANTHER" id="PTHR28580:SF1">
    <property type="entry name" value="GENERAL TRANSCRIPTION FACTOR IIH SUBUNIT 5"/>
    <property type="match status" value="1"/>
</dbReference>
<dbReference type="Pfam" id="PF06331">
    <property type="entry name" value="Tfb5"/>
    <property type="match status" value="1"/>
</dbReference>
<dbReference type="SMART" id="SM01395">
    <property type="entry name" value="Tbf5"/>
    <property type="match status" value="1"/>
</dbReference>
<dbReference type="SUPFAM" id="SSF142897">
    <property type="entry name" value="TFB5-like"/>
    <property type="match status" value="1"/>
</dbReference>
<proteinExistence type="inferred from homology"/>
<keyword id="KW-0227">DNA damage</keyword>
<keyword id="KW-0234">DNA repair</keyword>
<keyword id="KW-0539">Nucleus</keyword>
<keyword id="KW-1185">Reference proteome</keyword>
<keyword id="KW-0804">Transcription</keyword>
<keyword id="KW-0805">Transcription regulation</keyword>
<comment type="function">
    <text evidence="2">Component of the general transcription and DNA repair factor IIH (TFIIH) core complex, which is involved in general and transcription-coupled nucleotide excision repair (NER) of damaged DNA and, when complexed to TFIIK, in RNA transcription by RNA polymerase II. In NER, TFIIH acts by opening DNA around the lesion to allow the excision of the damaged oligonucleotide and its replacement by a new DNA fragment. In transcription, TFIIH has an essential role in transcription initiation. When the pre-initiation complex (PIC) has been established, TFIIH is required for promoter opening and promoter escape. Phosphorylation of the C-terminal tail (CTD) of the largest subunit of RNA polymerase II by the kinase module TFIIK controls the initiation of transcription.</text>
</comment>
<comment type="subunit">
    <text evidence="2">Component of the 7-subunit TFIIH core complex composed of XPB/SSL2, XPD/RAD3, SSL1, TFB1, TFB2, TFB4 and TFB5, which is active in NER. The core complex associates with the 3-subunit CTD-kinase module TFIIK composed of CCL1, KIN28 and TFB3 to form the 10-subunit holoenzyme (holo-TFIIH) active in transcription.</text>
</comment>
<comment type="subcellular location">
    <subcellularLocation>
        <location evidence="1">Nucleus</location>
    </subcellularLocation>
</comment>
<comment type="similarity">
    <text evidence="3">Belongs to the TFB5 family.</text>
</comment>
<evidence type="ECO:0000250" key="1"/>
<evidence type="ECO:0000250" key="2">
    <source>
        <dbReference type="UniProtKB" id="Q3E7C1"/>
    </source>
</evidence>
<evidence type="ECO:0000305" key="3"/>
<reference key="1">
    <citation type="journal article" date="2004" name="Science">
        <title>The Ashbya gossypii genome as a tool for mapping the ancient Saccharomyces cerevisiae genome.</title>
        <authorList>
            <person name="Dietrich F.S."/>
            <person name="Voegeli S."/>
            <person name="Brachat S."/>
            <person name="Lerch A."/>
            <person name="Gates K."/>
            <person name="Steiner S."/>
            <person name="Mohr C."/>
            <person name="Poehlmann R."/>
            <person name="Luedi P."/>
            <person name="Choi S."/>
            <person name="Wing R.A."/>
            <person name="Flavier A."/>
            <person name="Gaffney T.D."/>
            <person name="Philippsen P."/>
        </authorList>
    </citation>
    <scope>NUCLEOTIDE SEQUENCE [LARGE SCALE GENOMIC DNA]</scope>
    <source>
        <strain>ATCC 10895 / CBS 109.51 / FGSC 9923 / NRRL Y-1056</strain>
    </source>
</reference>
<reference key="2">
    <citation type="journal article" date="2013" name="G3 (Bethesda)">
        <title>Genomes of Ashbya fungi isolated from insects reveal four mating-type loci, numerous translocations, lack of transposons, and distinct gene duplications.</title>
        <authorList>
            <person name="Dietrich F.S."/>
            <person name="Voegeli S."/>
            <person name="Kuo S."/>
            <person name="Philippsen P."/>
        </authorList>
    </citation>
    <scope>GENOME REANNOTATION</scope>
    <source>
        <strain>ATCC 10895 / CBS 109.51 / FGSC 9923 / NRRL Y-1056</strain>
    </source>
</reference>
<sequence>MPRARKGALVQCDPSIRALILQIDSGTHDIIWEELDETHLLVDPAKVSYIKEKLNWFLSKNIYNPSEEEENP</sequence>
<protein>
    <recommendedName>
        <fullName>General transcription and DNA repair factor IIH subunit TFB5</fullName>
        <shortName>TFIIH subunit TFB5</shortName>
    </recommendedName>
    <alternativeName>
        <fullName>RNA polymerase II transcription factor B subunit 5</fullName>
    </alternativeName>
</protein>
<accession>Q74ZQ0</accession>